<feature type="chain" id="PRO_1000051233" description="Small ribosomal subunit protein uS9">
    <location>
        <begin position="1"/>
        <end position="129"/>
    </location>
</feature>
<sequence length="129" mass="14436">MRKIYATGKRKTAIAKVWLTPGKGGLSINEQSLNQWLGGHEAIKMKVMQPLLLTKQEQSVDIKAVVFGGGYSAQAEALRHGISKALNAYDIAFRAILKPKGLLTRDSRVVERKKYGKRKARRSPQFSKR</sequence>
<reference key="1">
    <citation type="journal article" date="2006" name="Proc. Natl. Acad. Sci. U.S.A.">
        <title>The complete genome sequence of a chronic atrophic gastritis Helicobacter pylori strain: evolution during disease progression.</title>
        <authorList>
            <person name="Oh J.D."/>
            <person name="Kling-Baeckhed H."/>
            <person name="Giannakis M."/>
            <person name="Xu J."/>
            <person name="Fulton R.S."/>
            <person name="Fulton L.A."/>
            <person name="Cordum H.S."/>
            <person name="Wang C."/>
            <person name="Elliott G."/>
            <person name="Edwards J."/>
            <person name="Mardis E.R."/>
            <person name="Engstrand L.G."/>
            <person name="Gordon J.I."/>
        </authorList>
    </citation>
    <scope>NUCLEOTIDE SEQUENCE [LARGE SCALE GENOMIC DNA]</scope>
    <source>
        <strain>HPAG1</strain>
    </source>
</reference>
<name>RS9_HELPH</name>
<gene>
    <name evidence="1" type="primary">rpsI</name>
    <name type="ordered locus">HPAG1_0084</name>
</gene>
<evidence type="ECO:0000255" key="1">
    <source>
        <dbReference type="HAMAP-Rule" id="MF_00532"/>
    </source>
</evidence>
<evidence type="ECO:0000305" key="2"/>
<protein>
    <recommendedName>
        <fullName evidence="1">Small ribosomal subunit protein uS9</fullName>
    </recommendedName>
    <alternativeName>
        <fullName evidence="2">30S ribosomal protein S9</fullName>
    </alternativeName>
</protein>
<comment type="similarity">
    <text evidence="1">Belongs to the universal ribosomal protein uS9 family.</text>
</comment>
<dbReference type="EMBL" id="CP000241">
    <property type="protein sequence ID" value="ABF84151.1"/>
    <property type="molecule type" value="Genomic_DNA"/>
</dbReference>
<dbReference type="RefSeq" id="WP_001227274.1">
    <property type="nucleotide sequence ID" value="NC_008086.1"/>
</dbReference>
<dbReference type="SMR" id="Q1CV71"/>
<dbReference type="KEGG" id="hpa:HPAG1_0084"/>
<dbReference type="HOGENOM" id="CLU_046483_2_1_7"/>
<dbReference type="GO" id="GO:0022627">
    <property type="term" value="C:cytosolic small ribosomal subunit"/>
    <property type="evidence" value="ECO:0007669"/>
    <property type="project" value="TreeGrafter"/>
</dbReference>
<dbReference type="GO" id="GO:0003723">
    <property type="term" value="F:RNA binding"/>
    <property type="evidence" value="ECO:0007669"/>
    <property type="project" value="TreeGrafter"/>
</dbReference>
<dbReference type="GO" id="GO:0003735">
    <property type="term" value="F:structural constituent of ribosome"/>
    <property type="evidence" value="ECO:0007669"/>
    <property type="project" value="InterPro"/>
</dbReference>
<dbReference type="GO" id="GO:0006412">
    <property type="term" value="P:translation"/>
    <property type="evidence" value="ECO:0007669"/>
    <property type="project" value="UniProtKB-UniRule"/>
</dbReference>
<dbReference type="FunFam" id="3.30.230.10:FF:000025">
    <property type="entry name" value="30S ribosomal protein S9"/>
    <property type="match status" value="1"/>
</dbReference>
<dbReference type="Gene3D" id="3.30.230.10">
    <property type="match status" value="1"/>
</dbReference>
<dbReference type="HAMAP" id="MF_00532_B">
    <property type="entry name" value="Ribosomal_uS9_B"/>
    <property type="match status" value="1"/>
</dbReference>
<dbReference type="InterPro" id="IPR020568">
    <property type="entry name" value="Ribosomal_Su5_D2-typ_SF"/>
</dbReference>
<dbReference type="InterPro" id="IPR000754">
    <property type="entry name" value="Ribosomal_uS9"/>
</dbReference>
<dbReference type="InterPro" id="IPR023035">
    <property type="entry name" value="Ribosomal_uS9_bac/plastid"/>
</dbReference>
<dbReference type="InterPro" id="IPR020574">
    <property type="entry name" value="Ribosomal_uS9_CS"/>
</dbReference>
<dbReference type="InterPro" id="IPR014721">
    <property type="entry name" value="Ribsml_uS5_D2-typ_fold_subgr"/>
</dbReference>
<dbReference type="NCBIfam" id="NF001099">
    <property type="entry name" value="PRK00132.1"/>
    <property type="match status" value="1"/>
</dbReference>
<dbReference type="PANTHER" id="PTHR21569">
    <property type="entry name" value="RIBOSOMAL PROTEIN S9"/>
    <property type="match status" value="1"/>
</dbReference>
<dbReference type="PANTHER" id="PTHR21569:SF1">
    <property type="entry name" value="SMALL RIBOSOMAL SUBUNIT PROTEIN US9M"/>
    <property type="match status" value="1"/>
</dbReference>
<dbReference type="Pfam" id="PF00380">
    <property type="entry name" value="Ribosomal_S9"/>
    <property type="match status" value="1"/>
</dbReference>
<dbReference type="SUPFAM" id="SSF54211">
    <property type="entry name" value="Ribosomal protein S5 domain 2-like"/>
    <property type="match status" value="1"/>
</dbReference>
<dbReference type="PROSITE" id="PS00360">
    <property type="entry name" value="RIBOSOMAL_S9"/>
    <property type="match status" value="1"/>
</dbReference>
<keyword id="KW-0687">Ribonucleoprotein</keyword>
<keyword id="KW-0689">Ribosomal protein</keyword>
<organism>
    <name type="scientific">Helicobacter pylori (strain HPAG1)</name>
    <dbReference type="NCBI Taxonomy" id="357544"/>
    <lineage>
        <taxon>Bacteria</taxon>
        <taxon>Pseudomonadati</taxon>
        <taxon>Campylobacterota</taxon>
        <taxon>Epsilonproteobacteria</taxon>
        <taxon>Campylobacterales</taxon>
        <taxon>Helicobacteraceae</taxon>
        <taxon>Helicobacter</taxon>
    </lineage>
</organism>
<accession>Q1CV71</accession>
<proteinExistence type="inferred from homology"/>